<gene>
    <name evidence="1" type="primary">rlmN</name>
    <name type="ordered locus">Bcen_6265</name>
</gene>
<sequence>MTSETSVNLLDFDAEGLVAYCGSLGEKPFRAKQLQRWIHQYNAGDFDGMTDLAKSLREKLKGRASIVMPDIASDHVSTDGTRKWLIDVGNGNAVETVFIPEETRGTLCVSSQAGCAVNCRFCSTGKQGFSRNLSTAEIIGQLRMAEFALRASLGRAPGPNGKAERVVTNVVMMGMGEPLLNYSAVVPAMRLMLDDNAYGLSRRRVTLSTSGVVPMMDRLGAELPVALAVSLHAPNDALRDELVPLNKKYPLRELMAACQRYLKVAPRDFITFEYCMLDGVNDTEAHARELLAVTRDVPCKFNLIPFNPFPESGLIRSKPEQIKRFAQVLIDAGVVTTVRKTRGDDIDAACGQLAGAVKDRTRLAERTGAAGKIIEVRAV</sequence>
<name>RLMN_BURO1</name>
<organism>
    <name type="scientific">Burkholderia orbicola (strain AU 1054)</name>
    <dbReference type="NCBI Taxonomy" id="331271"/>
    <lineage>
        <taxon>Bacteria</taxon>
        <taxon>Pseudomonadati</taxon>
        <taxon>Pseudomonadota</taxon>
        <taxon>Betaproteobacteria</taxon>
        <taxon>Burkholderiales</taxon>
        <taxon>Burkholderiaceae</taxon>
        <taxon>Burkholderia</taxon>
        <taxon>Burkholderia cepacia complex</taxon>
        <taxon>Burkholderia orbicola</taxon>
    </lineage>
</organism>
<keyword id="KW-0004">4Fe-4S</keyword>
<keyword id="KW-0963">Cytoplasm</keyword>
<keyword id="KW-1015">Disulfide bond</keyword>
<keyword id="KW-0408">Iron</keyword>
<keyword id="KW-0411">Iron-sulfur</keyword>
<keyword id="KW-0479">Metal-binding</keyword>
<keyword id="KW-0489">Methyltransferase</keyword>
<keyword id="KW-0698">rRNA processing</keyword>
<keyword id="KW-0949">S-adenosyl-L-methionine</keyword>
<keyword id="KW-0808">Transferase</keyword>
<keyword id="KW-0819">tRNA processing</keyword>
<proteinExistence type="inferred from homology"/>
<comment type="function">
    <text evidence="1">Specifically methylates position 2 of adenine 2503 in 23S rRNA and position 2 of adenine 37 in tRNAs. m2A2503 modification seems to play a crucial role in the proofreading step occurring at the peptidyl transferase center and thus would serve to optimize ribosomal fidelity.</text>
</comment>
<comment type="catalytic activity">
    <reaction evidence="1">
        <text>adenosine(2503) in 23S rRNA + 2 reduced [2Fe-2S]-[ferredoxin] + 2 S-adenosyl-L-methionine = 2-methyladenosine(2503) in 23S rRNA + 5'-deoxyadenosine + L-methionine + 2 oxidized [2Fe-2S]-[ferredoxin] + S-adenosyl-L-homocysteine</text>
        <dbReference type="Rhea" id="RHEA:42916"/>
        <dbReference type="Rhea" id="RHEA-COMP:10000"/>
        <dbReference type="Rhea" id="RHEA-COMP:10001"/>
        <dbReference type="Rhea" id="RHEA-COMP:10152"/>
        <dbReference type="Rhea" id="RHEA-COMP:10282"/>
        <dbReference type="ChEBI" id="CHEBI:17319"/>
        <dbReference type="ChEBI" id="CHEBI:33737"/>
        <dbReference type="ChEBI" id="CHEBI:33738"/>
        <dbReference type="ChEBI" id="CHEBI:57844"/>
        <dbReference type="ChEBI" id="CHEBI:57856"/>
        <dbReference type="ChEBI" id="CHEBI:59789"/>
        <dbReference type="ChEBI" id="CHEBI:74411"/>
        <dbReference type="ChEBI" id="CHEBI:74497"/>
        <dbReference type="EC" id="2.1.1.192"/>
    </reaction>
</comment>
<comment type="catalytic activity">
    <reaction evidence="1">
        <text>adenosine(37) in tRNA + 2 reduced [2Fe-2S]-[ferredoxin] + 2 S-adenosyl-L-methionine = 2-methyladenosine(37) in tRNA + 5'-deoxyadenosine + L-methionine + 2 oxidized [2Fe-2S]-[ferredoxin] + S-adenosyl-L-homocysteine</text>
        <dbReference type="Rhea" id="RHEA:43332"/>
        <dbReference type="Rhea" id="RHEA-COMP:10000"/>
        <dbReference type="Rhea" id="RHEA-COMP:10001"/>
        <dbReference type="Rhea" id="RHEA-COMP:10162"/>
        <dbReference type="Rhea" id="RHEA-COMP:10485"/>
        <dbReference type="ChEBI" id="CHEBI:17319"/>
        <dbReference type="ChEBI" id="CHEBI:33737"/>
        <dbReference type="ChEBI" id="CHEBI:33738"/>
        <dbReference type="ChEBI" id="CHEBI:57844"/>
        <dbReference type="ChEBI" id="CHEBI:57856"/>
        <dbReference type="ChEBI" id="CHEBI:59789"/>
        <dbReference type="ChEBI" id="CHEBI:74411"/>
        <dbReference type="ChEBI" id="CHEBI:74497"/>
        <dbReference type="EC" id="2.1.1.192"/>
    </reaction>
</comment>
<comment type="cofactor">
    <cofactor evidence="1">
        <name>[4Fe-4S] cluster</name>
        <dbReference type="ChEBI" id="CHEBI:49883"/>
    </cofactor>
    <text evidence="1">Binds 1 [4Fe-4S] cluster. The cluster is coordinated with 3 cysteines and an exchangeable S-adenosyl-L-methionine.</text>
</comment>
<comment type="subcellular location">
    <subcellularLocation>
        <location evidence="1">Cytoplasm</location>
    </subcellularLocation>
</comment>
<comment type="miscellaneous">
    <text evidence="1">Reaction proceeds by a ping-pong mechanism involving intermediate methylation of a conserved cysteine residue.</text>
</comment>
<comment type="similarity">
    <text evidence="1">Belongs to the radical SAM superfamily. RlmN family.</text>
</comment>
<evidence type="ECO:0000255" key="1">
    <source>
        <dbReference type="HAMAP-Rule" id="MF_01849"/>
    </source>
</evidence>
<evidence type="ECO:0000255" key="2">
    <source>
        <dbReference type="PROSITE-ProRule" id="PRU01266"/>
    </source>
</evidence>
<dbReference type="EC" id="2.1.1.192" evidence="1"/>
<dbReference type="EMBL" id="CP000380">
    <property type="protein sequence ID" value="ABF81129.1"/>
    <property type="molecule type" value="Genomic_DNA"/>
</dbReference>
<dbReference type="SMR" id="Q1BGX6"/>
<dbReference type="HOGENOM" id="CLU_029101_0_0_4"/>
<dbReference type="GO" id="GO:0005737">
    <property type="term" value="C:cytoplasm"/>
    <property type="evidence" value="ECO:0007669"/>
    <property type="project" value="UniProtKB-SubCell"/>
</dbReference>
<dbReference type="GO" id="GO:0051539">
    <property type="term" value="F:4 iron, 4 sulfur cluster binding"/>
    <property type="evidence" value="ECO:0007669"/>
    <property type="project" value="UniProtKB-UniRule"/>
</dbReference>
<dbReference type="GO" id="GO:0046872">
    <property type="term" value="F:metal ion binding"/>
    <property type="evidence" value="ECO:0007669"/>
    <property type="project" value="UniProtKB-KW"/>
</dbReference>
<dbReference type="GO" id="GO:0070040">
    <property type="term" value="F:rRNA (adenine(2503)-C2-)-methyltransferase activity"/>
    <property type="evidence" value="ECO:0007669"/>
    <property type="project" value="UniProtKB-UniRule"/>
</dbReference>
<dbReference type="GO" id="GO:0019843">
    <property type="term" value="F:rRNA binding"/>
    <property type="evidence" value="ECO:0007669"/>
    <property type="project" value="UniProtKB-UniRule"/>
</dbReference>
<dbReference type="GO" id="GO:0002935">
    <property type="term" value="F:tRNA (adenine(37)-C2)-methyltransferase activity"/>
    <property type="evidence" value="ECO:0007669"/>
    <property type="project" value="UniProtKB-UniRule"/>
</dbReference>
<dbReference type="GO" id="GO:0000049">
    <property type="term" value="F:tRNA binding"/>
    <property type="evidence" value="ECO:0007669"/>
    <property type="project" value="UniProtKB-UniRule"/>
</dbReference>
<dbReference type="GO" id="GO:0070475">
    <property type="term" value="P:rRNA base methylation"/>
    <property type="evidence" value="ECO:0007669"/>
    <property type="project" value="UniProtKB-UniRule"/>
</dbReference>
<dbReference type="GO" id="GO:0030488">
    <property type="term" value="P:tRNA methylation"/>
    <property type="evidence" value="ECO:0007669"/>
    <property type="project" value="UniProtKB-UniRule"/>
</dbReference>
<dbReference type="CDD" id="cd01335">
    <property type="entry name" value="Radical_SAM"/>
    <property type="match status" value="1"/>
</dbReference>
<dbReference type="FunFam" id="1.10.150.530:FF:000003">
    <property type="entry name" value="Dual-specificity RNA methyltransferase RlmN"/>
    <property type="match status" value="1"/>
</dbReference>
<dbReference type="FunFam" id="3.20.20.70:FF:000008">
    <property type="entry name" value="Dual-specificity RNA methyltransferase RlmN"/>
    <property type="match status" value="1"/>
</dbReference>
<dbReference type="Gene3D" id="1.10.150.530">
    <property type="match status" value="1"/>
</dbReference>
<dbReference type="Gene3D" id="3.20.20.70">
    <property type="entry name" value="Aldolase class I"/>
    <property type="match status" value="1"/>
</dbReference>
<dbReference type="HAMAP" id="MF_01849">
    <property type="entry name" value="RNA_methyltr_RlmN"/>
    <property type="match status" value="1"/>
</dbReference>
<dbReference type="InterPro" id="IPR013785">
    <property type="entry name" value="Aldolase_TIM"/>
</dbReference>
<dbReference type="InterPro" id="IPR040072">
    <property type="entry name" value="Methyltransferase_A"/>
</dbReference>
<dbReference type="InterPro" id="IPR048641">
    <property type="entry name" value="RlmN_N"/>
</dbReference>
<dbReference type="InterPro" id="IPR027492">
    <property type="entry name" value="RNA_MTrfase_RlmN"/>
</dbReference>
<dbReference type="InterPro" id="IPR004383">
    <property type="entry name" value="rRNA_lsu_MTrfase_RlmN/Cfr"/>
</dbReference>
<dbReference type="InterPro" id="IPR007197">
    <property type="entry name" value="rSAM"/>
</dbReference>
<dbReference type="NCBIfam" id="TIGR00048">
    <property type="entry name" value="rRNA_mod_RlmN"/>
    <property type="match status" value="1"/>
</dbReference>
<dbReference type="PANTHER" id="PTHR30544">
    <property type="entry name" value="23S RRNA METHYLTRANSFERASE"/>
    <property type="match status" value="1"/>
</dbReference>
<dbReference type="PANTHER" id="PTHR30544:SF5">
    <property type="entry name" value="RADICAL SAM CORE DOMAIN-CONTAINING PROTEIN"/>
    <property type="match status" value="1"/>
</dbReference>
<dbReference type="Pfam" id="PF04055">
    <property type="entry name" value="Radical_SAM"/>
    <property type="match status" value="1"/>
</dbReference>
<dbReference type="Pfam" id="PF21016">
    <property type="entry name" value="RlmN_N"/>
    <property type="match status" value="1"/>
</dbReference>
<dbReference type="PIRSF" id="PIRSF006004">
    <property type="entry name" value="CHP00048"/>
    <property type="match status" value="1"/>
</dbReference>
<dbReference type="SFLD" id="SFLDF00275">
    <property type="entry name" value="adenosine_C2_methyltransferase"/>
    <property type="match status" value="1"/>
</dbReference>
<dbReference type="SFLD" id="SFLDS00029">
    <property type="entry name" value="Radical_SAM"/>
    <property type="match status" value="1"/>
</dbReference>
<dbReference type="SUPFAM" id="SSF102114">
    <property type="entry name" value="Radical SAM enzymes"/>
    <property type="match status" value="1"/>
</dbReference>
<dbReference type="PROSITE" id="PS51918">
    <property type="entry name" value="RADICAL_SAM"/>
    <property type="match status" value="1"/>
</dbReference>
<feature type="chain" id="PRO_0000350072" description="Dual-specificity RNA methyltransferase RlmN">
    <location>
        <begin position="1"/>
        <end position="379"/>
    </location>
</feature>
<feature type="domain" description="Radical SAM core" evidence="2">
    <location>
        <begin position="101"/>
        <end position="345"/>
    </location>
</feature>
<feature type="active site" description="Proton acceptor" evidence="1">
    <location>
        <position position="95"/>
    </location>
</feature>
<feature type="active site" description="S-methylcysteine intermediate" evidence="1">
    <location>
        <position position="350"/>
    </location>
</feature>
<feature type="binding site" evidence="1">
    <location>
        <position position="115"/>
    </location>
    <ligand>
        <name>[4Fe-4S] cluster</name>
        <dbReference type="ChEBI" id="CHEBI:49883"/>
        <note>4Fe-4S-S-AdoMet</note>
    </ligand>
</feature>
<feature type="binding site" evidence="1">
    <location>
        <position position="119"/>
    </location>
    <ligand>
        <name>[4Fe-4S] cluster</name>
        <dbReference type="ChEBI" id="CHEBI:49883"/>
        <note>4Fe-4S-S-AdoMet</note>
    </ligand>
</feature>
<feature type="binding site" evidence="1">
    <location>
        <position position="122"/>
    </location>
    <ligand>
        <name>[4Fe-4S] cluster</name>
        <dbReference type="ChEBI" id="CHEBI:49883"/>
        <note>4Fe-4S-S-AdoMet</note>
    </ligand>
</feature>
<feature type="binding site" evidence="1">
    <location>
        <begin position="176"/>
        <end position="177"/>
    </location>
    <ligand>
        <name>S-adenosyl-L-methionine</name>
        <dbReference type="ChEBI" id="CHEBI:59789"/>
    </ligand>
</feature>
<feature type="binding site" evidence="1">
    <location>
        <position position="208"/>
    </location>
    <ligand>
        <name>S-adenosyl-L-methionine</name>
        <dbReference type="ChEBI" id="CHEBI:59789"/>
    </ligand>
</feature>
<feature type="binding site" evidence="1">
    <location>
        <begin position="230"/>
        <end position="232"/>
    </location>
    <ligand>
        <name>S-adenosyl-L-methionine</name>
        <dbReference type="ChEBI" id="CHEBI:59789"/>
    </ligand>
</feature>
<feature type="binding site" evidence="1">
    <location>
        <position position="307"/>
    </location>
    <ligand>
        <name>S-adenosyl-L-methionine</name>
        <dbReference type="ChEBI" id="CHEBI:59789"/>
    </ligand>
</feature>
<feature type="disulfide bond" description="(transient)" evidence="1">
    <location>
        <begin position="108"/>
        <end position="350"/>
    </location>
</feature>
<reference key="1">
    <citation type="submission" date="2006-05" db="EMBL/GenBank/DDBJ databases">
        <title>Complete sequence of chromosome 3 of Burkholderia cenocepacia AU 1054.</title>
        <authorList>
            <consortium name="US DOE Joint Genome Institute"/>
            <person name="Copeland A."/>
            <person name="Lucas S."/>
            <person name="Lapidus A."/>
            <person name="Barry K."/>
            <person name="Detter J.C."/>
            <person name="Glavina del Rio T."/>
            <person name="Hammon N."/>
            <person name="Israni S."/>
            <person name="Dalin E."/>
            <person name="Tice H."/>
            <person name="Pitluck S."/>
            <person name="Chain P."/>
            <person name="Malfatti S."/>
            <person name="Shin M."/>
            <person name="Vergez L."/>
            <person name="Schmutz J."/>
            <person name="Larimer F."/>
            <person name="Land M."/>
            <person name="Hauser L."/>
            <person name="Kyrpides N."/>
            <person name="Lykidis A."/>
            <person name="LiPuma J.J."/>
            <person name="Konstantinidis K."/>
            <person name="Tiedje J.M."/>
            <person name="Richardson P."/>
        </authorList>
    </citation>
    <scope>NUCLEOTIDE SEQUENCE [LARGE SCALE GENOMIC DNA]</scope>
    <source>
        <strain>AU 1054</strain>
    </source>
</reference>
<accession>Q1BGX6</accession>
<protein>
    <recommendedName>
        <fullName evidence="1">Dual-specificity RNA methyltransferase RlmN</fullName>
        <ecNumber evidence="1">2.1.1.192</ecNumber>
    </recommendedName>
    <alternativeName>
        <fullName evidence="1">23S rRNA (adenine(2503)-C(2))-methyltransferase</fullName>
    </alternativeName>
    <alternativeName>
        <fullName evidence="1">23S rRNA m2A2503 methyltransferase</fullName>
    </alternativeName>
    <alternativeName>
        <fullName evidence="1">Ribosomal RNA large subunit methyltransferase N</fullName>
    </alternativeName>
    <alternativeName>
        <fullName evidence="1">tRNA (adenine(37)-C(2))-methyltransferase</fullName>
    </alternativeName>
    <alternativeName>
        <fullName evidence="1">tRNA m2A37 methyltransferase</fullName>
    </alternativeName>
</protein>